<comment type="function">
    <text>Activation of RuBisCO (ribulose-1,5-bisphosphate carboxylase/oxygenase; EC 4.1.1.39) involves the ATP-dependent carboxylation of the epsilon-amino group of lysine leading to a carbamate structure.</text>
</comment>
<comment type="subcellular location">
    <subcellularLocation>
        <location>Plastid</location>
        <location>Chloroplast stroma</location>
    </subcellularLocation>
</comment>
<comment type="similarity">
    <text evidence="2">Belongs to the RuBisCO activase family.</text>
</comment>
<feature type="transit peptide" description="Chloroplast" evidence="1">
    <location>
        <begin position="1"/>
        <end status="unknown"/>
    </location>
</feature>
<feature type="chain" id="PRO_0000030239" description="Ribulose bisphosphate carboxylase/oxygenase activase, chloroplastic">
    <location>
        <begin status="unknown"/>
        <end position="439"/>
    </location>
</feature>
<feature type="binding site" evidence="1">
    <location>
        <begin position="167"/>
        <end position="174"/>
    </location>
    <ligand>
        <name>ATP</name>
        <dbReference type="ChEBI" id="CHEBI:30616"/>
    </ligand>
</feature>
<organism>
    <name type="scientific">Vigna radiata var. radiata</name>
    <name type="common">Mung bean</name>
    <name type="synonym">Phaseolus aureus</name>
    <dbReference type="NCBI Taxonomy" id="3916"/>
    <lineage>
        <taxon>Eukaryota</taxon>
        <taxon>Viridiplantae</taxon>
        <taxon>Streptophyta</taxon>
        <taxon>Embryophyta</taxon>
        <taxon>Tracheophyta</taxon>
        <taxon>Spermatophyta</taxon>
        <taxon>Magnoliopsida</taxon>
        <taxon>eudicotyledons</taxon>
        <taxon>Gunneridae</taxon>
        <taxon>Pentapetalae</taxon>
        <taxon>rosids</taxon>
        <taxon>fabids</taxon>
        <taxon>Fabales</taxon>
        <taxon>Fabaceae</taxon>
        <taxon>Papilionoideae</taxon>
        <taxon>50 kb inversion clade</taxon>
        <taxon>NPAAA clade</taxon>
        <taxon>indigoferoid/millettioid clade</taxon>
        <taxon>Phaseoleae</taxon>
        <taxon>Vigna</taxon>
    </lineage>
</organism>
<name>RCA_VIGRR</name>
<sequence length="439" mass="47902">MAASVSTVGAVNRAILNLNGSGAGASAPTSAFFGTSLKKAVASRVPNSKVTNGSFKIVAAEKEIEESQQTNKDRWKGLAYDISDDQQDITRGKGMVDPLFQAPMDAGTHYAVMSSYEYLSTGLRQLDNIKDGFYIAPAFLDKLVVHITKNFMTLPNIKVPLILGIWGGKGQGKSFQCELVFAKMGINPIMMSAGELESGNAGEPAKLIRQRYREAADLIAKGKMCALFINDLDAGAGRLGGTTQYTVNNQMVNATLMNIADNPTNVQLPGMYNKEENARVPIIVTGNDFSTLYAPLIRDGRMEKFYWAPTRDDRVGVCKGIFRTDGVPEEDITKLVDTFPGQSIDFFGALRARVYDDEVRKWISGVGVDATGKKLVNSKEGPPTFDQPKMSLDKLLQYGNMLVQEQENVKRVQLADKYLNEAALGNANEDAIKSGSFFK</sequence>
<keyword id="KW-0067">ATP-binding</keyword>
<keyword id="KW-0150">Chloroplast</keyword>
<keyword id="KW-0547">Nucleotide-binding</keyword>
<keyword id="KW-0934">Plastid</keyword>
<keyword id="KW-1185">Reference proteome</keyword>
<keyword id="KW-0809">Transit peptide</keyword>
<reference key="1">
    <citation type="submission" date="2000-07" db="EMBL/GenBank/DDBJ databases">
        <title>Cloning and sequencing of a Vigna radiata cDNA.</title>
        <authorList>
            <person name="Yang M.T."/>
            <person name="Chen Y.M."/>
        </authorList>
    </citation>
    <scope>NUCLEOTIDE SEQUENCE [MRNA]</scope>
    <source>
        <strain>cv. 2937</strain>
    </source>
</reference>
<evidence type="ECO:0000255" key="1"/>
<evidence type="ECO:0000305" key="2"/>
<dbReference type="EMBL" id="AF126870">
    <property type="protein sequence ID" value="AAD20019.2"/>
    <property type="molecule type" value="mRNA"/>
</dbReference>
<dbReference type="RefSeq" id="NP_001304204.1">
    <property type="nucleotide sequence ID" value="NM_001317275.1"/>
</dbReference>
<dbReference type="SMR" id="O98997"/>
<dbReference type="STRING" id="3916.O98997"/>
<dbReference type="GeneID" id="106757684"/>
<dbReference type="KEGG" id="vra:106757684"/>
<dbReference type="OrthoDB" id="2014558at2759"/>
<dbReference type="Proteomes" id="UP000087766">
    <property type="component" value="Chromosome 3"/>
</dbReference>
<dbReference type="GO" id="GO:0009570">
    <property type="term" value="C:chloroplast stroma"/>
    <property type="evidence" value="ECO:0007669"/>
    <property type="project" value="UniProtKB-SubCell"/>
</dbReference>
<dbReference type="GO" id="GO:0009579">
    <property type="term" value="C:thylakoid"/>
    <property type="evidence" value="ECO:0007669"/>
    <property type="project" value="TreeGrafter"/>
</dbReference>
<dbReference type="GO" id="GO:0005524">
    <property type="term" value="F:ATP binding"/>
    <property type="evidence" value="ECO:0007669"/>
    <property type="project" value="UniProtKB-KW"/>
</dbReference>
<dbReference type="GO" id="GO:0016887">
    <property type="term" value="F:ATP hydrolysis activity"/>
    <property type="evidence" value="ECO:0007669"/>
    <property type="project" value="InterPro"/>
</dbReference>
<dbReference type="GO" id="GO:0046863">
    <property type="term" value="F:ribulose-1,5-bisphosphate carboxylase/oxygenase activator activity"/>
    <property type="evidence" value="ECO:0007669"/>
    <property type="project" value="TreeGrafter"/>
</dbReference>
<dbReference type="FunFam" id="1.10.8.1070:FF:000001">
    <property type="entry name" value="Ribulose bisphosphate carboxylase/oxygenase activase, chloroplastic"/>
    <property type="match status" value="1"/>
</dbReference>
<dbReference type="FunFam" id="3.40.50.300:FF:000258">
    <property type="entry name" value="Ribulose bisphosphate carboxylase/oxygenase activase, chloroplastic"/>
    <property type="match status" value="1"/>
</dbReference>
<dbReference type="Gene3D" id="1.10.8.1070">
    <property type="match status" value="1"/>
</dbReference>
<dbReference type="Gene3D" id="3.40.50.300">
    <property type="entry name" value="P-loop containing nucleotide triphosphate hydrolases"/>
    <property type="match status" value="1"/>
</dbReference>
<dbReference type="InterPro" id="IPR003959">
    <property type="entry name" value="ATPase_AAA_core"/>
</dbReference>
<dbReference type="InterPro" id="IPR027417">
    <property type="entry name" value="P-loop_NTPase"/>
</dbReference>
<dbReference type="InterPro" id="IPR044960">
    <property type="entry name" value="RCA-like"/>
</dbReference>
<dbReference type="InterPro" id="IPR048571">
    <property type="entry name" value="RuBisCO_activase_AAA_helical"/>
</dbReference>
<dbReference type="PANTHER" id="PTHR32429">
    <property type="match status" value="1"/>
</dbReference>
<dbReference type="PANTHER" id="PTHR32429:SF35">
    <property type="entry name" value="RIBULOSE BISPHOSPHATE CARBOXYLASE_OXYGENASE ACTIVASE, CHLOROPLASTIC"/>
    <property type="match status" value="1"/>
</dbReference>
<dbReference type="Pfam" id="PF00004">
    <property type="entry name" value="AAA"/>
    <property type="match status" value="1"/>
</dbReference>
<dbReference type="Pfam" id="PF21228">
    <property type="entry name" value="RuBisCO_activase_AAA_helical"/>
    <property type="match status" value="1"/>
</dbReference>
<dbReference type="SUPFAM" id="SSF52540">
    <property type="entry name" value="P-loop containing nucleoside triphosphate hydrolases"/>
    <property type="match status" value="1"/>
</dbReference>
<accession>O98997</accession>
<proteinExistence type="evidence at transcript level"/>
<protein>
    <recommendedName>
        <fullName>Ribulose bisphosphate carboxylase/oxygenase activase, chloroplastic</fullName>
        <shortName>RA</shortName>
        <shortName>RuBisCO activase</shortName>
    </recommendedName>
</protein>
<gene>
    <name type="primary">RCA</name>
</gene>